<sequence>MKESLLAKSVRIAAVVAAYWTISISLVFLNKYLLSSPDIKLDAPLFVTWYQCVVTVICLFFLSLLGDRYPWIDTFPAFHIKLSVAKQVLPLSAVFVGMITFNNLCLKNLGVSFYNVGRSLTTVFNVICTYVILGQSTSYKAVICCAVIIGGFLMGVDQEGSSGKISYSGVLFGVLASLCVSLNAIYTKKFIPAVDNNIWRLQLYNNFNACFLFLPLMALLGEIGEVAHFPNLSSAYFWLMMTIGGVFGIAIGYITGLQIKVTSPLTHNISGTAKACVQTIMSVSYFHETKTALWWLSNAMVLGGSMAYTRVRHSEMKKAHTIQASKDDKALQEDGQTKV</sequence>
<reference key="1">
    <citation type="journal article" date="2007" name="Science">
        <title>Sea anemone genome reveals ancestral eumetazoan gene repertoire and genomic organization.</title>
        <authorList>
            <person name="Putnam N.H."/>
            <person name="Srivastava M."/>
            <person name="Hellsten U."/>
            <person name="Dirks B."/>
            <person name="Chapman J."/>
            <person name="Salamov A."/>
            <person name="Terry A."/>
            <person name="Shapiro H."/>
            <person name="Lindquist E."/>
            <person name="Kapitonov V.V."/>
            <person name="Jurka J."/>
            <person name="Genikhovich G."/>
            <person name="Grigoriev I.V."/>
            <person name="Lucas S.M."/>
            <person name="Steele R.E."/>
            <person name="Finnerty J.R."/>
            <person name="Technau U."/>
            <person name="Martindale M.Q."/>
            <person name="Rokhsar D.S."/>
        </authorList>
    </citation>
    <scope>NUCLEOTIDE SEQUENCE [LARGE SCALE GENOMIC DNA]</scope>
    <source>
        <strain>CH2 X CH6</strain>
    </source>
</reference>
<proteinExistence type="inferred from homology"/>
<protein>
    <recommendedName>
        <fullName>GDP-fucose transporter 1</fullName>
    </recommendedName>
    <alternativeName>
        <fullName>Solute carrier family 35 member C1 homolog</fullName>
    </alternativeName>
</protein>
<name>FUCT1_NEMVE</name>
<gene>
    <name type="primary">slc35c1</name>
    <name type="synonym">fuct1</name>
    <name type="ORF">v1g205399</name>
</gene>
<comment type="function">
    <text evidence="1">Antiporter specific for GDP-l-fucose and depending on the concomitant reverse transport of GMP. Involved in GDP-fucose import from the cytoplasm into the Golgi lumen.</text>
</comment>
<comment type="catalytic activity">
    <reaction evidence="1">
        <text>GMP(out) + GDP-beta-L-fucose(in) = GMP(in) + GDP-beta-L-fucose(out)</text>
        <dbReference type="Rhea" id="RHEA:72707"/>
        <dbReference type="ChEBI" id="CHEBI:57273"/>
        <dbReference type="ChEBI" id="CHEBI:58115"/>
    </reaction>
</comment>
<comment type="subcellular location">
    <subcellularLocation>
        <location evidence="1">Golgi apparatus membrane</location>
        <topology evidence="2">Multi-pass membrane protein</topology>
    </subcellularLocation>
</comment>
<comment type="similarity">
    <text evidence="4">Belongs to the TPT transporter family. SLC35C subfamily.</text>
</comment>
<accession>A7S1L6</accession>
<evidence type="ECO:0000250" key="1">
    <source>
        <dbReference type="UniProtKB" id="Q96A29"/>
    </source>
</evidence>
<evidence type="ECO:0000255" key="2"/>
<evidence type="ECO:0000256" key="3">
    <source>
        <dbReference type="SAM" id="MobiDB-lite"/>
    </source>
</evidence>
<evidence type="ECO:0000305" key="4"/>
<dbReference type="EMBL" id="DS469565">
    <property type="protein sequence ID" value="EDO42347.1"/>
    <property type="molecule type" value="Genomic_DNA"/>
</dbReference>
<dbReference type="RefSeq" id="XP_001634410.1">
    <property type="nucleotide sequence ID" value="XM_001634360.1"/>
</dbReference>
<dbReference type="SMR" id="A7S1L6"/>
<dbReference type="STRING" id="45351.A7S1L6"/>
<dbReference type="EnsemblMetazoa" id="EDO42347">
    <property type="protein sequence ID" value="EDO42347"/>
    <property type="gene ID" value="NEMVEDRAFT_v1g205399"/>
</dbReference>
<dbReference type="GeneID" id="5514196"/>
<dbReference type="KEGG" id="nve:5514196"/>
<dbReference type="eggNOG" id="KOG1442">
    <property type="taxonomic scope" value="Eukaryota"/>
</dbReference>
<dbReference type="HOGENOM" id="CLU_044894_1_0_1"/>
<dbReference type="InParanoid" id="A7S1L6"/>
<dbReference type="OMA" id="WWTSNIV"/>
<dbReference type="OrthoDB" id="5547497at2759"/>
<dbReference type="PhylomeDB" id="A7S1L6"/>
<dbReference type="Proteomes" id="UP000001593">
    <property type="component" value="Unassembled WGS sequence"/>
</dbReference>
<dbReference type="GO" id="GO:0005794">
    <property type="term" value="C:Golgi apparatus"/>
    <property type="evidence" value="ECO:0000318"/>
    <property type="project" value="GO_Central"/>
</dbReference>
<dbReference type="GO" id="GO:0000139">
    <property type="term" value="C:Golgi membrane"/>
    <property type="evidence" value="ECO:0000250"/>
    <property type="project" value="UniProtKB"/>
</dbReference>
<dbReference type="GO" id="GO:0015297">
    <property type="term" value="F:antiporter activity"/>
    <property type="evidence" value="ECO:0000318"/>
    <property type="project" value="GO_Central"/>
</dbReference>
<dbReference type="GO" id="GO:0005457">
    <property type="term" value="F:GDP-fucose transmembrane transporter activity"/>
    <property type="evidence" value="ECO:0000250"/>
    <property type="project" value="UniProtKB"/>
</dbReference>
<dbReference type="GO" id="GO:0036085">
    <property type="term" value="P:GDP-fucose import into Golgi lumen"/>
    <property type="evidence" value="ECO:0000250"/>
    <property type="project" value="UniProtKB"/>
</dbReference>
<dbReference type="InterPro" id="IPR004853">
    <property type="entry name" value="Sugar_P_trans_dom"/>
</dbReference>
<dbReference type="InterPro" id="IPR050186">
    <property type="entry name" value="TPT_transporter"/>
</dbReference>
<dbReference type="PANTHER" id="PTHR11132">
    <property type="entry name" value="SOLUTE CARRIER FAMILY 35"/>
    <property type="match status" value="1"/>
</dbReference>
<dbReference type="Pfam" id="PF03151">
    <property type="entry name" value="TPT"/>
    <property type="match status" value="1"/>
</dbReference>
<organism>
    <name type="scientific">Nematostella vectensis</name>
    <name type="common">Starlet sea anemone</name>
    <dbReference type="NCBI Taxonomy" id="45351"/>
    <lineage>
        <taxon>Eukaryota</taxon>
        <taxon>Metazoa</taxon>
        <taxon>Cnidaria</taxon>
        <taxon>Anthozoa</taxon>
        <taxon>Hexacorallia</taxon>
        <taxon>Actiniaria</taxon>
        <taxon>Edwardsiidae</taxon>
        <taxon>Nematostella</taxon>
    </lineage>
</organism>
<feature type="chain" id="PRO_0000343212" description="GDP-fucose transporter 1">
    <location>
        <begin position="1"/>
        <end position="339"/>
    </location>
</feature>
<feature type="transmembrane region" description="Helical" evidence="2">
    <location>
        <begin position="9"/>
        <end position="29"/>
    </location>
</feature>
<feature type="transmembrane region" description="Helical" evidence="2">
    <location>
        <begin position="45"/>
        <end position="65"/>
    </location>
</feature>
<feature type="transmembrane region" description="Helical" evidence="2">
    <location>
        <begin position="82"/>
        <end position="102"/>
    </location>
</feature>
<feature type="transmembrane region" description="Helical" evidence="2">
    <location>
        <begin position="111"/>
        <end position="133"/>
    </location>
</feature>
<feature type="transmembrane region" description="Helical" evidence="2">
    <location>
        <begin position="136"/>
        <end position="156"/>
    </location>
</feature>
<feature type="transmembrane region" description="Helical" evidence="2">
    <location>
        <begin position="165"/>
        <end position="185"/>
    </location>
</feature>
<feature type="transmembrane region" description="Helical" evidence="2">
    <location>
        <begin position="209"/>
        <end position="229"/>
    </location>
</feature>
<feature type="transmembrane region" description="Helical" evidence="2">
    <location>
        <begin position="237"/>
        <end position="257"/>
    </location>
</feature>
<feature type="region of interest" description="Disordered" evidence="3">
    <location>
        <begin position="319"/>
        <end position="339"/>
    </location>
</feature>
<feature type="compositionally biased region" description="Basic and acidic residues" evidence="3">
    <location>
        <begin position="325"/>
        <end position="339"/>
    </location>
</feature>
<keyword id="KW-0333">Golgi apparatus</keyword>
<keyword id="KW-0472">Membrane</keyword>
<keyword id="KW-1185">Reference proteome</keyword>
<keyword id="KW-0762">Sugar transport</keyword>
<keyword id="KW-0812">Transmembrane</keyword>
<keyword id="KW-1133">Transmembrane helix</keyword>
<keyword id="KW-0813">Transport</keyword>